<keyword id="KW-0997">Cell inner membrane</keyword>
<keyword id="KW-1003">Cell membrane</keyword>
<keyword id="KW-0472">Membrane</keyword>
<keyword id="KW-1185">Reference proteome</keyword>
<keyword id="KW-0732">Signal</keyword>
<keyword id="KW-0812">Transmembrane</keyword>
<keyword id="KW-1133">Transmembrane helix</keyword>
<evidence type="ECO:0000255" key="1"/>
<evidence type="ECO:0000255" key="2">
    <source>
        <dbReference type="PROSITE-ProRule" id="PRU00074"/>
    </source>
</evidence>
<evidence type="ECO:0000255" key="3">
    <source>
        <dbReference type="PROSITE-ProRule" id="PRU00095"/>
    </source>
</evidence>
<evidence type="ECO:0000255" key="4">
    <source>
        <dbReference type="PROSITE-ProRule" id="PRU00102"/>
    </source>
</evidence>
<evidence type="ECO:0000269" key="5">
    <source>
    </source>
</evidence>
<evidence type="ECO:0000269" key="6">
    <source>
    </source>
</evidence>
<evidence type="ECO:0000305" key="7"/>
<accession>Q9KU26</accession>
<sequence length="791" mass="90794">MKLNHRILLLIAPVILLSAAASSYIIYTSQKNALLKRTDSYLQLNIEKLASHYRQAQSLVSSYAFTLAKSDIIRHYFSLEKNPYRELELVDNLRETLQILQPNEKQLVSLSILNGHEELLYYAENSSDPFAELDPKVMAYIKQRFASTQKNSDISYTVNSAGEDILVRYDMLDTQTLSTPLSYNRQDVFFVVVYVVLEQFSQLRKKIEFDNQSPIFFTHSPPSYRTGLLQSVELQPGFYAILDPAPKLINAQLHSIQRELLLSFGVSALVTVLMLLLLLYRHVINPILHLDKQLEEVENNQRKNIEKLNTDDEIGRLSSRFYAMYSELHSTYQRTKALAENDHLTKLANRYQFQVQADLLLSRCYDTQHIWVMYIDLDNFKYVNDKYGHQIGDSLLVSFATHVRQLCKNFEASHNTYSIAARLSGDEFAILLVSPKRFNDCAKIFAQRLLAPIQNKDNSPLSHFPITASIGIATFPKDGEHIEKLLLNADTAMYQAKNAGKNQVAYYSQALDQIVQRRNNIERALRLGLFDQEFNLAYQPYFTCSGKRLVGFEVLLRWQSELLGEVSPEEFIPIAEQTGLFGTIDRWVISKAFQEISTLQAIVKEPIQVSINLSSAELNSLKLAQFIHRQAEQFGVSPAWIDFEITETFAADSQSFPLLHELSRLGYGLTIDDFGSGYTSITQLVQYPVQKIKFDRHFLDTLIATNKQNVIRPLIDLCHSQSMKVTAEGIESETMHQWLADYECDYMQGFYFGYPMSLSEISPWLHASNHKKKSYAQDHYCFTEPSQSECR</sequence>
<gene>
    <name type="primary">mbaA</name>
    <name type="ordered locus">VC_0703</name>
</gene>
<organism>
    <name type="scientific">Vibrio cholerae serotype O1 (strain ATCC 39315 / El Tor Inaba N16961)</name>
    <dbReference type="NCBI Taxonomy" id="243277"/>
    <lineage>
        <taxon>Bacteria</taxon>
        <taxon>Pseudomonadati</taxon>
        <taxon>Pseudomonadota</taxon>
        <taxon>Gammaproteobacteria</taxon>
        <taxon>Vibrionales</taxon>
        <taxon>Vibrionaceae</taxon>
        <taxon>Vibrio</taxon>
    </lineage>
</organism>
<dbReference type="EMBL" id="AE003852">
    <property type="protein sequence ID" value="AAF93868.1"/>
    <property type="molecule type" value="Genomic_DNA"/>
</dbReference>
<dbReference type="PIR" id="A82291">
    <property type="entry name" value="A82291"/>
</dbReference>
<dbReference type="RefSeq" id="NP_230352.1">
    <property type="nucleotide sequence ID" value="NC_002505.1"/>
</dbReference>
<dbReference type="RefSeq" id="WP_000773112.1">
    <property type="nucleotide sequence ID" value="NZ_LT906614.1"/>
</dbReference>
<dbReference type="SMR" id="Q9KU26"/>
<dbReference type="STRING" id="243277.VC_0703"/>
<dbReference type="DNASU" id="2615707"/>
<dbReference type="EnsemblBacteria" id="AAF93868">
    <property type="protein sequence ID" value="AAF93868"/>
    <property type="gene ID" value="VC_0703"/>
</dbReference>
<dbReference type="KEGG" id="vch:VC_0703"/>
<dbReference type="PATRIC" id="fig|243277.26.peg.673"/>
<dbReference type="eggNOG" id="COG5001">
    <property type="taxonomic scope" value="Bacteria"/>
</dbReference>
<dbReference type="HOGENOM" id="CLU_000445_70_45_6"/>
<dbReference type="Proteomes" id="UP000000584">
    <property type="component" value="Chromosome 1"/>
</dbReference>
<dbReference type="GO" id="GO:0005886">
    <property type="term" value="C:plasma membrane"/>
    <property type="evidence" value="ECO:0007669"/>
    <property type="project" value="UniProtKB-SubCell"/>
</dbReference>
<dbReference type="GO" id="GO:0007165">
    <property type="term" value="P:signal transduction"/>
    <property type="evidence" value="ECO:0007669"/>
    <property type="project" value="InterPro"/>
</dbReference>
<dbReference type="CDD" id="cd01948">
    <property type="entry name" value="EAL"/>
    <property type="match status" value="1"/>
</dbReference>
<dbReference type="CDD" id="cd01949">
    <property type="entry name" value="GGDEF"/>
    <property type="match status" value="1"/>
</dbReference>
<dbReference type="FunFam" id="3.20.20.450:FF:000020">
    <property type="entry name" value="Biofilm architecture maintenance protein MbaA"/>
    <property type="match status" value="1"/>
</dbReference>
<dbReference type="FunFam" id="3.30.70.270:FF:000089">
    <property type="entry name" value="Biofilm architecture maintenance protein mbaA"/>
    <property type="match status" value="1"/>
</dbReference>
<dbReference type="Gene3D" id="3.30.70.270">
    <property type="match status" value="1"/>
</dbReference>
<dbReference type="Gene3D" id="6.10.340.10">
    <property type="match status" value="1"/>
</dbReference>
<dbReference type="Gene3D" id="3.20.20.450">
    <property type="entry name" value="EAL domain"/>
    <property type="match status" value="1"/>
</dbReference>
<dbReference type="InterPro" id="IPR052155">
    <property type="entry name" value="Biofilm_reg_signaling"/>
</dbReference>
<dbReference type="InterPro" id="IPR001633">
    <property type="entry name" value="EAL_dom"/>
</dbReference>
<dbReference type="InterPro" id="IPR035919">
    <property type="entry name" value="EAL_sf"/>
</dbReference>
<dbReference type="InterPro" id="IPR000160">
    <property type="entry name" value="GGDEF_dom"/>
</dbReference>
<dbReference type="InterPro" id="IPR003660">
    <property type="entry name" value="HAMP_dom"/>
</dbReference>
<dbReference type="InterPro" id="IPR029787">
    <property type="entry name" value="Nucleotide_cyclase"/>
</dbReference>
<dbReference type="InterPro" id="IPR043128">
    <property type="entry name" value="Rev_trsase/Diguanyl_cyclase"/>
</dbReference>
<dbReference type="NCBIfam" id="TIGR00254">
    <property type="entry name" value="GGDEF"/>
    <property type="match status" value="1"/>
</dbReference>
<dbReference type="PANTHER" id="PTHR44757:SF2">
    <property type="entry name" value="BIOFILM ARCHITECTURE MAINTENANCE PROTEIN MBAA"/>
    <property type="match status" value="1"/>
</dbReference>
<dbReference type="PANTHER" id="PTHR44757">
    <property type="entry name" value="DIGUANYLATE CYCLASE DGCP"/>
    <property type="match status" value="1"/>
</dbReference>
<dbReference type="Pfam" id="PF00563">
    <property type="entry name" value="EAL"/>
    <property type="match status" value="1"/>
</dbReference>
<dbReference type="Pfam" id="PF00990">
    <property type="entry name" value="GGDEF"/>
    <property type="match status" value="1"/>
</dbReference>
<dbReference type="SMART" id="SM00052">
    <property type="entry name" value="EAL"/>
    <property type="match status" value="1"/>
</dbReference>
<dbReference type="SMART" id="SM00267">
    <property type="entry name" value="GGDEF"/>
    <property type="match status" value="1"/>
</dbReference>
<dbReference type="SUPFAM" id="SSF141868">
    <property type="entry name" value="EAL domain-like"/>
    <property type="match status" value="1"/>
</dbReference>
<dbReference type="SUPFAM" id="SSF55073">
    <property type="entry name" value="Nucleotide cyclase"/>
    <property type="match status" value="1"/>
</dbReference>
<dbReference type="PROSITE" id="PS50883">
    <property type="entry name" value="EAL"/>
    <property type="match status" value="1"/>
</dbReference>
<dbReference type="PROSITE" id="PS50887">
    <property type="entry name" value="GGDEF"/>
    <property type="match status" value="1"/>
</dbReference>
<dbReference type="PROSITE" id="PS50885">
    <property type="entry name" value="HAMP"/>
    <property type="match status" value="1"/>
</dbReference>
<proteinExistence type="inferred from homology"/>
<name>MBAA_VIBCH</name>
<comment type="function">
    <text evidence="5 6">Plays an essential role in the maintenance and the formation of the three-dimensional structure of the biofilms at the later stages of their development. Absence of mbaA promotes the accumulation of larger amount of biomass on the surfaces at later stage of development, results in the overproduction of an extracellular polymeric substance that accumulates in the matrix of biofilms. This yields biofilms lacking the typical structure consisting of pillars of cells separated by fluid filled channels.</text>
</comment>
<comment type="subcellular location">
    <subcellularLocation>
        <location evidence="7">Cell inner membrane</location>
        <topology evidence="7">Single-pass type I membrane protein</topology>
    </subcellularLocation>
</comment>
<feature type="signal peptide" evidence="1">
    <location>
        <begin position="1"/>
        <end position="23"/>
    </location>
</feature>
<feature type="chain" id="PRO_0000042814" description="Biofilm architecture maintenance protein MbaA">
    <location>
        <begin position="24"/>
        <end position="791"/>
    </location>
</feature>
<feature type="topological domain" description="Periplasmic" evidence="1">
    <location>
        <begin position="24"/>
        <end position="259"/>
    </location>
</feature>
<feature type="transmembrane region" description="Helical" evidence="1">
    <location>
        <begin position="260"/>
        <end position="280"/>
    </location>
</feature>
<feature type="topological domain" description="Cytoplasmic" evidence="1">
    <location>
        <begin position="281"/>
        <end position="791"/>
    </location>
</feature>
<feature type="domain" description="HAMP" evidence="4">
    <location>
        <begin position="281"/>
        <end position="333"/>
    </location>
</feature>
<feature type="domain" description="GGDEF" evidence="3">
    <location>
        <begin position="368"/>
        <end position="509"/>
    </location>
</feature>
<feature type="domain" description="EAL" evidence="2">
    <location>
        <begin position="518"/>
        <end position="769"/>
    </location>
</feature>
<reference key="1">
    <citation type="journal article" date="2000" name="Nature">
        <title>DNA sequence of both chromosomes of the cholera pathogen Vibrio cholerae.</title>
        <authorList>
            <person name="Heidelberg J.F."/>
            <person name="Eisen J.A."/>
            <person name="Nelson W.C."/>
            <person name="Clayton R.A."/>
            <person name="Gwinn M.L."/>
            <person name="Dodson R.J."/>
            <person name="Haft D.H."/>
            <person name="Hickey E.K."/>
            <person name="Peterson J.D."/>
            <person name="Umayam L.A."/>
            <person name="Gill S.R."/>
            <person name="Nelson K.E."/>
            <person name="Read T.D."/>
            <person name="Tettelin H."/>
            <person name="Richardson D.L."/>
            <person name="Ermolaeva M.D."/>
            <person name="Vamathevan J.J."/>
            <person name="Bass S."/>
            <person name="Qin H."/>
            <person name="Dragoi I."/>
            <person name="Sellers P."/>
            <person name="McDonald L.A."/>
            <person name="Utterback T.R."/>
            <person name="Fleischmann R.D."/>
            <person name="Nierman W.C."/>
            <person name="White O."/>
            <person name="Salzberg S.L."/>
            <person name="Smith H.O."/>
            <person name="Colwell R.R."/>
            <person name="Mekalanos J.J."/>
            <person name="Venter J.C."/>
            <person name="Fraser C.M."/>
        </authorList>
    </citation>
    <scope>NUCLEOTIDE SEQUENCE [LARGE SCALE GENOMIC DNA]</scope>
    <source>
        <strain>ATCC 39315 / El Tor Inaba N16961</strain>
    </source>
</reference>
<reference key="2">
    <citation type="journal article" date="2003" name="J. Bacteriol.">
        <title>Identification and characterization of a Vibrio cholerae gene, mbaA, involved in maintenance of biofilm architecture.</title>
        <authorList>
            <person name="Bomchil N."/>
            <person name="Watnick P."/>
            <person name="Kolter R."/>
        </authorList>
    </citation>
    <scope>FUNCTION</scope>
    <source>
        <strain>ATCC 39315 / El Tor Inaba N16961</strain>
    </source>
</reference>
<reference key="3">
    <citation type="journal article" date="2005" name="J. Bacteriol.">
        <title>NspS, a predicted polyamine sensor, mediates activation of Vibrio cholerae biofilm formation by norspermidine.</title>
        <authorList>
            <person name="Karatan E."/>
            <person name="Duncan T.R."/>
            <person name="Watnick P.I."/>
        </authorList>
    </citation>
    <scope>FUNCTION</scope>
    <source>
        <strain>MO10 / Serotype O139</strain>
    </source>
</reference>
<protein>
    <recommendedName>
        <fullName>Biofilm architecture maintenance protein MbaA</fullName>
    </recommendedName>
</protein>